<dbReference type="EMBL" id="AE014297">
    <property type="protein sequence ID" value="AAF56493.1"/>
    <property type="molecule type" value="Genomic_DNA"/>
</dbReference>
<dbReference type="EMBL" id="BT022260">
    <property type="protein sequence ID" value="AAY54676.1"/>
    <property type="molecule type" value="mRNA"/>
</dbReference>
<dbReference type="EMBL" id="BT022935">
    <property type="protein sequence ID" value="AAY55351.1"/>
    <property type="molecule type" value="mRNA"/>
</dbReference>
<dbReference type="RefSeq" id="NP_651415.1">
    <molecule id="Q9VBN7-2"/>
    <property type="nucleotide sequence ID" value="NM_143158.2"/>
</dbReference>
<dbReference type="SMR" id="Q9VBN7"/>
<dbReference type="BioGRID" id="68012">
    <property type="interactions" value="1"/>
</dbReference>
<dbReference type="FunCoup" id="Q9VBN7">
    <property type="interactions" value="859"/>
</dbReference>
<dbReference type="IntAct" id="Q9VBN7">
    <property type="interactions" value="5"/>
</dbReference>
<dbReference type="STRING" id="7227.FBpp0084307"/>
<dbReference type="GlyGen" id="Q9VBN7">
    <property type="glycosylation" value="1 site"/>
</dbReference>
<dbReference type="PaxDb" id="7227-FBpp0084307"/>
<dbReference type="DNASU" id="43101"/>
<dbReference type="EnsemblMetazoa" id="FBtr0084933">
    <molecule id="Q9VBN7-2"/>
    <property type="protein sequence ID" value="FBpp0084307"/>
    <property type="gene ID" value="FBgn0039357"/>
</dbReference>
<dbReference type="GeneID" id="43101"/>
<dbReference type="KEGG" id="dme:Dmel_CG4743"/>
<dbReference type="UCSC" id="CG4743-RA">
    <molecule id="Q9VBN7-1"/>
    <property type="organism name" value="d. melanogaster"/>
</dbReference>
<dbReference type="AGR" id="FB:FBgn0039357"/>
<dbReference type="FlyBase" id="FBgn0039357">
    <property type="gene designation" value="CG4743"/>
</dbReference>
<dbReference type="VEuPathDB" id="VectorBase:FBgn0039357"/>
<dbReference type="eggNOG" id="KOG0768">
    <property type="taxonomic scope" value="Eukaryota"/>
</dbReference>
<dbReference type="GeneTree" id="ENSGT00550000074950"/>
<dbReference type="HOGENOM" id="CLU_015166_3_0_1"/>
<dbReference type="InParanoid" id="Q9VBN7"/>
<dbReference type="OMA" id="IGPRTMW"/>
<dbReference type="OrthoDB" id="276989at2759"/>
<dbReference type="PhylomeDB" id="Q9VBN7"/>
<dbReference type="Reactome" id="R-DME-425393">
    <property type="pathway name" value="Transport of inorganic cations/anions and amino acids/oligopeptides"/>
</dbReference>
<dbReference type="BioGRID-ORCS" id="43101">
    <property type="hits" value="0 hits in 1 CRISPR screen"/>
</dbReference>
<dbReference type="GenomeRNAi" id="43101"/>
<dbReference type="PRO" id="PR:Q9VBN7"/>
<dbReference type="Proteomes" id="UP000000803">
    <property type="component" value="Chromosome 3R"/>
</dbReference>
<dbReference type="Bgee" id="FBgn0039357">
    <property type="expression patterns" value="Expressed in thoracico-abdominal ganglion (Drosophila) and 66 other cell types or tissues"/>
</dbReference>
<dbReference type="GO" id="GO:0005743">
    <property type="term" value="C:mitochondrial inner membrane"/>
    <property type="evidence" value="ECO:0000250"/>
    <property type="project" value="UniProtKB"/>
</dbReference>
<dbReference type="GO" id="GO:0000095">
    <property type="term" value="F:S-adenosyl-L-methionine transmembrane transporter activity"/>
    <property type="evidence" value="ECO:0000250"/>
    <property type="project" value="UniProtKB"/>
</dbReference>
<dbReference type="GO" id="GO:0015805">
    <property type="term" value="P:S-adenosyl-L-methionine transport"/>
    <property type="evidence" value="ECO:0000250"/>
    <property type="project" value="UniProtKB"/>
</dbReference>
<dbReference type="FunFam" id="1.50.40.10:FF:000018">
    <property type="entry name" value="S-adenosylmethionine mitochondrial carrier protein-like"/>
    <property type="match status" value="1"/>
</dbReference>
<dbReference type="Gene3D" id="1.50.40.10">
    <property type="entry name" value="Mitochondrial carrier domain"/>
    <property type="match status" value="1"/>
</dbReference>
<dbReference type="InterPro" id="IPR002067">
    <property type="entry name" value="Mit_carrier"/>
</dbReference>
<dbReference type="InterPro" id="IPR018108">
    <property type="entry name" value="Mitochondrial_sb/sol_carrier"/>
</dbReference>
<dbReference type="InterPro" id="IPR023395">
    <property type="entry name" value="Mt_carrier_dom_sf"/>
</dbReference>
<dbReference type="PANTHER" id="PTHR45667">
    <property type="entry name" value="S-ADENOSYLMETHIONINE MITOCHONDRIAL CARRIER PROTEIN"/>
    <property type="match status" value="1"/>
</dbReference>
<dbReference type="Pfam" id="PF00153">
    <property type="entry name" value="Mito_carr"/>
    <property type="match status" value="3"/>
</dbReference>
<dbReference type="PRINTS" id="PR00926">
    <property type="entry name" value="MITOCARRIER"/>
</dbReference>
<dbReference type="SUPFAM" id="SSF103506">
    <property type="entry name" value="Mitochondrial carrier"/>
    <property type="match status" value="1"/>
</dbReference>
<dbReference type="PROSITE" id="PS50920">
    <property type="entry name" value="SOLCAR"/>
    <property type="match status" value="3"/>
</dbReference>
<gene>
    <name type="ORF">CG4743</name>
</gene>
<feature type="chain" id="PRO_0000317592" description="S-adenosylmethionine mitochondrial carrier protein homolog">
    <location>
        <begin position="1"/>
        <end position="283"/>
    </location>
</feature>
<feature type="transmembrane region" description="Helical; Name=1" evidence="2">
    <location>
        <begin position="14"/>
        <end position="34"/>
    </location>
</feature>
<feature type="transmembrane region" description="Helical; Name=2" evidence="2">
    <location>
        <begin position="55"/>
        <end position="75"/>
    </location>
</feature>
<feature type="transmembrane region" description="Helical; Name=3" evidence="2">
    <location>
        <begin position="99"/>
        <end position="119"/>
    </location>
</feature>
<feature type="transmembrane region" description="Helical; Name=4" evidence="2">
    <location>
        <begin position="152"/>
        <end position="172"/>
    </location>
</feature>
<feature type="transmembrane region" description="Helical; Name=5" evidence="2">
    <location>
        <begin position="190"/>
        <end position="210"/>
    </location>
</feature>
<feature type="transmembrane region" description="Helical; Name=6" evidence="2">
    <location>
        <begin position="248"/>
        <end position="268"/>
    </location>
</feature>
<feature type="repeat" description="Solcar 1">
    <location>
        <begin position="11"/>
        <end position="84"/>
    </location>
</feature>
<feature type="repeat" description="Solcar 2">
    <location>
        <begin position="93"/>
        <end position="178"/>
    </location>
</feature>
<feature type="repeat" description="Solcar 3">
    <location>
        <begin position="187"/>
        <end position="275"/>
    </location>
</feature>
<feature type="splice variant" id="VSP_031065" description="In isoform 2." evidence="4">
    <original>MHLL</original>
    <variation>MAAELGLESAAGSVAIKM</variation>
    <location>
        <begin position="1"/>
        <end position="4"/>
    </location>
</feature>
<keyword id="KW-0025">Alternative splicing</keyword>
<keyword id="KW-0472">Membrane</keyword>
<keyword id="KW-0496">Mitochondrion</keyword>
<keyword id="KW-0999">Mitochondrion inner membrane</keyword>
<keyword id="KW-1185">Reference proteome</keyword>
<keyword id="KW-0677">Repeat</keyword>
<keyword id="KW-0949">S-adenosyl-L-methionine</keyword>
<keyword id="KW-0812">Transmembrane</keyword>
<keyword id="KW-1133">Transmembrane helix</keyword>
<keyword id="KW-0813">Transport</keyword>
<reference key="1">
    <citation type="journal article" date="2000" name="Science">
        <title>The genome sequence of Drosophila melanogaster.</title>
        <authorList>
            <person name="Adams M.D."/>
            <person name="Celniker S.E."/>
            <person name="Holt R.A."/>
            <person name="Evans C.A."/>
            <person name="Gocayne J.D."/>
            <person name="Amanatides P.G."/>
            <person name="Scherer S.E."/>
            <person name="Li P.W."/>
            <person name="Hoskins R.A."/>
            <person name="Galle R.F."/>
            <person name="George R.A."/>
            <person name="Lewis S.E."/>
            <person name="Richards S."/>
            <person name="Ashburner M."/>
            <person name="Henderson S.N."/>
            <person name="Sutton G.G."/>
            <person name="Wortman J.R."/>
            <person name="Yandell M.D."/>
            <person name="Zhang Q."/>
            <person name="Chen L.X."/>
            <person name="Brandon R.C."/>
            <person name="Rogers Y.-H.C."/>
            <person name="Blazej R.G."/>
            <person name="Champe M."/>
            <person name="Pfeiffer B.D."/>
            <person name="Wan K.H."/>
            <person name="Doyle C."/>
            <person name="Baxter E.G."/>
            <person name="Helt G."/>
            <person name="Nelson C.R."/>
            <person name="Miklos G.L.G."/>
            <person name="Abril J.F."/>
            <person name="Agbayani A."/>
            <person name="An H.-J."/>
            <person name="Andrews-Pfannkoch C."/>
            <person name="Baldwin D."/>
            <person name="Ballew R.M."/>
            <person name="Basu A."/>
            <person name="Baxendale J."/>
            <person name="Bayraktaroglu L."/>
            <person name="Beasley E.M."/>
            <person name="Beeson K.Y."/>
            <person name="Benos P.V."/>
            <person name="Berman B.P."/>
            <person name="Bhandari D."/>
            <person name="Bolshakov S."/>
            <person name="Borkova D."/>
            <person name="Botchan M.R."/>
            <person name="Bouck J."/>
            <person name="Brokstein P."/>
            <person name="Brottier P."/>
            <person name="Burtis K.C."/>
            <person name="Busam D.A."/>
            <person name="Butler H."/>
            <person name="Cadieu E."/>
            <person name="Center A."/>
            <person name="Chandra I."/>
            <person name="Cherry J.M."/>
            <person name="Cawley S."/>
            <person name="Dahlke C."/>
            <person name="Davenport L.B."/>
            <person name="Davies P."/>
            <person name="de Pablos B."/>
            <person name="Delcher A."/>
            <person name="Deng Z."/>
            <person name="Mays A.D."/>
            <person name="Dew I."/>
            <person name="Dietz S.M."/>
            <person name="Dodson K."/>
            <person name="Doup L.E."/>
            <person name="Downes M."/>
            <person name="Dugan-Rocha S."/>
            <person name="Dunkov B.C."/>
            <person name="Dunn P."/>
            <person name="Durbin K.J."/>
            <person name="Evangelista C.C."/>
            <person name="Ferraz C."/>
            <person name="Ferriera S."/>
            <person name="Fleischmann W."/>
            <person name="Fosler C."/>
            <person name="Gabrielian A.E."/>
            <person name="Garg N.S."/>
            <person name="Gelbart W.M."/>
            <person name="Glasser K."/>
            <person name="Glodek A."/>
            <person name="Gong F."/>
            <person name="Gorrell J.H."/>
            <person name="Gu Z."/>
            <person name="Guan P."/>
            <person name="Harris M."/>
            <person name="Harris N.L."/>
            <person name="Harvey D.A."/>
            <person name="Heiman T.J."/>
            <person name="Hernandez J.R."/>
            <person name="Houck J."/>
            <person name="Hostin D."/>
            <person name="Houston K.A."/>
            <person name="Howland T.J."/>
            <person name="Wei M.-H."/>
            <person name="Ibegwam C."/>
            <person name="Jalali M."/>
            <person name="Kalush F."/>
            <person name="Karpen G.H."/>
            <person name="Ke Z."/>
            <person name="Kennison J.A."/>
            <person name="Ketchum K.A."/>
            <person name="Kimmel B.E."/>
            <person name="Kodira C.D."/>
            <person name="Kraft C.L."/>
            <person name="Kravitz S."/>
            <person name="Kulp D."/>
            <person name="Lai Z."/>
            <person name="Lasko P."/>
            <person name="Lei Y."/>
            <person name="Levitsky A.A."/>
            <person name="Li J.H."/>
            <person name="Li Z."/>
            <person name="Liang Y."/>
            <person name="Lin X."/>
            <person name="Liu X."/>
            <person name="Mattei B."/>
            <person name="McIntosh T.C."/>
            <person name="McLeod M.P."/>
            <person name="McPherson D."/>
            <person name="Merkulov G."/>
            <person name="Milshina N.V."/>
            <person name="Mobarry C."/>
            <person name="Morris J."/>
            <person name="Moshrefi A."/>
            <person name="Mount S.M."/>
            <person name="Moy M."/>
            <person name="Murphy B."/>
            <person name="Murphy L."/>
            <person name="Muzny D.M."/>
            <person name="Nelson D.L."/>
            <person name="Nelson D.R."/>
            <person name="Nelson K.A."/>
            <person name="Nixon K."/>
            <person name="Nusskern D.R."/>
            <person name="Pacleb J.M."/>
            <person name="Palazzolo M."/>
            <person name="Pittman G.S."/>
            <person name="Pan S."/>
            <person name="Pollard J."/>
            <person name="Puri V."/>
            <person name="Reese M.G."/>
            <person name="Reinert K."/>
            <person name="Remington K."/>
            <person name="Saunders R.D.C."/>
            <person name="Scheeler F."/>
            <person name="Shen H."/>
            <person name="Shue B.C."/>
            <person name="Siden-Kiamos I."/>
            <person name="Simpson M."/>
            <person name="Skupski M.P."/>
            <person name="Smith T.J."/>
            <person name="Spier E."/>
            <person name="Spradling A.C."/>
            <person name="Stapleton M."/>
            <person name="Strong R."/>
            <person name="Sun E."/>
            <person name="Svirskas R."/>
            <person name="Tector C."/>
            <person name="Turner R."/>
            <person name="Venter E."/>
            <person name="Wang A.H."/>
            <person name="Wang X."/>
            <person name="Wang Z.-Y."/>
            <person name="Wassarman D.A."/>
            <person name="Weinstock G.M."/>
            <person name="Weissenbach J."/>
            <person name="Williams S.M."/>
            <person name="Woodage T."/>
            <person name="Worley K.C."/>
            <person name="Wu D."/>
            <person name="Yang S."/>
            <person name="Yao Q.A."/>
            <person name="Ye J."/>
            <person name="Yeh R.-F."/>
            <person name="Zaveri J.S."/>
            <person name="Zhan M."/>
            <person name="Zhang G."/>
            <person name="Zhao Q."/>
            <person name="Zheng L."/>
            <person name="Zheng X.H."/>
            <person name="Zhong F.N."/>
            <person name="Zhong W."/>
            <person name="Zhou X."/>
            <person name="Zhu S.C."/>
            <person name="Zhu X."/>
            <person name="Smith H.O."/>
            <person name="Gibbs R.A."/>
            <person name="Myers E.W."/>
            <person name="Rubin G.M."/>
            <person name="Venter J.C."/>
        </authorList>
    </citation>
    <scope>NUCLEOTIDE SEQUENCE [LARGE SCALE GENOMIC DNA]</scope>
    <source>
        <strain>Berkeley</strain>
    </source>
</reference>
<reference key="2">
    <citation type="journal article" date="2002" name="Genome Biol.">
        <title>Annotation of the Drosophila melanogaster euchromatic genome: a systematic review.</title>
        <authorList>
            <person name="Misra S."/>
            <person name="Crosby M.A."/>
            <person name="Mungall C.J."/>
            <person name="Matthews B.B."/>
            <person name="Campbell K.S."/>
            <person name="Hradecky P."/>
            <person name="Huang Y."/>
            <person name="Kaminker J.S."/>
            <person name="Millburn G.H."/>
            <person name="Prochnik S.E."/>
            <person name="Smith C.D."/>
            <person name="Tupy J.L."/>
            <person name="Whitfield E.J."/>
            <person name="Bayraktaroglu L."/>
            <person name="Berman B.P."/>
            <person name="Bettencourt B.R."/>
            <person name="Celniker S.E."/>
            <person name="de Grey A.D.N.J."/>
            <person name="Drysdale R.A."/>
            <person name="Harris N.L."/>
            <person name="Richter J."/>
            <person name="Russo S."/>
            <person name="Schroeder A.J."/>
            <person name="Shu S.Q."/>
            <person name="Stapleton M."/>
            <person name="Yamada C."/>
            <person name="Ashburner M."/>
            <person name="Gelbart W.M."/>
            <person name="Rubin G.M."/>
            <person name="Lewis S.E."/>
        </authorList>
    </citation>
    <scope>GENOME REANNOTATION</scope>
    <scope>ALTERNATIVE SPLICING</scope>
    <source>
        <strain>Berkeley</strain>
    </source>
</reference>
<reference key="3">
    <citation type="submission" date="2005-05" db="EMBL/GenBank/DDBJ databases">
        <authorList>
            <person name="Stapleton M."/>
            <person name="Carlson J.W."/>
            <person name="Chavez C."/>
            <person name="Frise E."/>
            <person name="George R.A."/>
            <person name="Pacleb J.M."/>
            <person name="Park S."/>
            <person name="Wan K.H."/>
            <person name="Yu C."/>
            <person name="Celniker S.E."/>
        </authorList>
    </citation>
    <scope>NUCLEOTIDE SEQUENCE [LARGE SCALE MRNA] (ISOFORM 1)</scope>
    <source>
        <strain>Berkeley</strain>
    </source>
</reference>
<reference key="4">
    <citation type="journal article" date="2016" name="Genes Dev.">
        <title>Tissue-specific down-regulation of S-adenosyl-homocysteine via suppression of dAhcyL1/dAhcyL2 extends health span and life span in Drosophila.</title>
        <authorList>
            <person name="Parkhitko A.A."/>
            <person name="Binari R."/>
            <person name="Zhang N."/>
            <person name="Asara J.M."/>
            <person name="Demontis F."/>
            <person name="Perrimon N."/>
        </authorList>
    </citation>
    <scope>DISRUPTION PHENOTYPE</scope>
</reference>
<organism>
    <name type="scientific">Drosophila melanogaster</name>
    <name type="common">Fruit fly</name>
    <dbReference type="NCBI Taxonomy" id="7227"/>
    <lineage>
        <taxon>Eukaryota</taxon>
        <taxon>Metazoa</taxon>
        <taxon>Ecdysozoa</taxon>
        <taxon>Arthropoda</taxon>
        <taxon>Hexapoda</taxon>
        <taxon>Insecta</taxon>
        <taxon>Pterygota</taxon>
        <taxon>Neoptera</taxon>
        <taxon>Endopterygota</taxon>
        <taxon>Diptera</taxon>
        <taxon>Brachycera</taxon>
        <taxon>Muscomorpha</taxon>
        <taxon>Ephydroidea</taxon>
        <taxon>Drosophilidae</taxon>
        <taxon>Drosophila</taxon>
        <taxon>Sophophora</taxon>
    </lineage>
</organism>
<protein>
    <recommendedName>
        <fullName>S-adenosylmethionine mitochondrial carrier protein homolog</fullName>
    </recommendedName>
</protein>
<sequence>MHLLQEPVNKLKFFHALVAGGVAGMVVDIALFPIDTVKTRLQSELGFWRAGGFRGIYKGLAPAAAGSAPTAALFFCTYECGKQFLSSVTQTKDSPYVHMAAASAAEVLACLIRVPVEIAKQRSQTLQGNKQSGLQILLRAYRTEGLKRGLYRGFGSTIMREIPFSLIQFPLWEYFKLQWTPLTGFDSTPFSVALCGAVAGGISAGLTTPLDVVKTRIMLAERESLNRRRSARRILHGIYLERGFSGLFAGFVPRVLWITLGGAFFFGFYDLTTRILGATSTDH</sequence>
<proteinExistence type="evidence at transcript level"/>
<accession>Q9VBN7</accession>
<accession>Q4V4S1</accession>
<comment type="function">
    <text evidence="1">Mitochondrial solute carriers shuttle metabolites, nucleotides, and cofactors through the mitochondrial inner membrane. May mediate the transport of S-adenosylmethionine (SAM) into the mitochondria (By similarity).</text>
</comment>
<comment type="subcellular location">
    <subcellularLocation>
        <location evidence="1">Mitochondrion inner membrane</location>
        <topology evidence="1">Multi-pass membrane protein</topology>
    </subcellularLocation>
</comment>
<comment type="alternative products">
    <event type="alternative splicing"/>
    <isoform>
        <id>Q9VBN7-1</id>
        <name>1</name>
        <sequence type="displayed"/>
    </isoform>
    <isoform>
        <id>Q9VBN7-2</id>
        <name>2</name>
        <sequence type="described" ref="VSP_031065"/>
    </isoform>
</comment>
<comment type="disruption phenotype">
    <text evidence="3">RNAi-mediated knockdown results in extended lifespan.</text>
</comment>
<comment type="similarity">
    <text evidence="4">Belongs to the mitochondrial carrier (TC 2.A.29) family.</text>
</comment>
<evidence type="ECO:0000250" key="1"/>
<evidence type="ECO:0000255" key="2"/>
<evidence type="ECO:0000269" key="3">
    <source>
    </source>
</evidence>
<evidence type="ECO:0000305" key="4"/>
<name>SAMC_DROME</name>